<proteinExistence type="evidence at protein level"/>
<evidence type="ECO:0000250" key="1"/>
<evidence type="ECO:0000255" key="2">
    <source>
        <dbReference type="PROSITE-ProRule" id="PRU00681"/>
    </source>
</evidence>
<evidence type="ECO:0000305" key="3"/>
<evidence type="ECO:0007829" key="4">
    <source>
        <dbReference type="PDB" id="1QR5"/>
    </source>
</evidence>
<name>PTHP_STACA</name>
<dbReference type="EMBL" id="M69050">
    <property type="protein sequence ID" value="AAA26663.1"/>
    <property type="molecule type" value="Genomic_DNA"/>
</dbReference>
<dbReference type="EMBL" id="X60766">
    <property type="protein sequence ID" value="CAA43175.1"/>
    <property type="molecule type" value="Genomic_DNA"/>
</dbReference>
<dbReference type="PIR" id="S15367">
    <property type="entry name" value="A42374"/>
</dbReference>
<dbReference type="RefSeq" id="WP_015899958.1">
    <property type="nucleotide sequence ID" value="NZ_UHCY01000001.1"/>
</dbReference>
<dbReference type="PDB" id="1QR5">
    <property type="method" value="NMR"/>
    <property type="chains" value="A=1-88"/>
</dbReference>
<dbReference type="PDB" id="1TXE">
    <property type="method" value="NMR"/>
    <property type="chains" value="A=1-88"/>
</dbReference>
<dbReference type="PDBsum" id="1QR5"/>
<dbReference type="PDBsum" id="1TXE"/>
<dbReference type="BMRB" id="P23534"/>
<dbReference type="SMR" id="P23534"/>
<dbReference type="PATRIC" id="fig|1281.6.peg.2535"/>
<dbReference type="OMA" id="AEVWVTR"/>
<dbReference type="EvolutionaryTrace" id="P23534"/>
<dbReference type="GO" id="GO:0005737">
    <property type="term" value="C:cytoplasm"/>
    <property type="evidence" value="ECO:0007669"/>
    <property type="project" value="UniProtKB-SubCell"/>
</dbReference>
<dbReference type="GO" id="GO:0009401">
    <property type="term" value="P:phosphoenolpyruvate-dependent sugar phosphotransferase system"/>
    <property type="evidence" value="ECO:0007669"/>
    <property type="project" value="UniProtKB-KW"/>
</dbReference>
<dbReference type="CDD" id="cd00367">
    <property type="entry name" value="PTS-HPr_like"/>
    <property type="match status" value="1"/>
</dbReference>
<dbReference type="Gene3D" id="3.30.1340.10">
    <property type="entry name" value="HPr-like"/>
    <property type="match status" value="1"/>
</dbReference>
<dbReference type="InterPro" id="IPR050399">
    <property type="entry name" value="HPr"/>
</dbReference>
<dbReference type="InterPro" id="IPR000032">
    <property type="entry name" value="HPr-like"/>
</dbReference>
<dbReference type="InterPro" id="IPR035895">
    <property type="entry name" value="HPr-like_sf"/>
</dbReference>
<dbReference type="InterPro" id="IPR001020">
    <property type="entry name" value="PTS_HPr_His_P_site"/>
</dbReference>
<dbReference type="InterPro" id="IPR002114">
    <property type="entry name" value="PTS_HPr_Ser_P_site"/>
</dbReference>
<dbReference type="NCBIfam" id="NF010352">
    <property type="entry name" value="PRK13780.1"/>
    <property type="match status" value="1"/>
</dbReference>
<dbReference type="NCBIfam" id="TIGR01003">
    <property type="entry name" value="PTS_HPr_family"/>
    <property type="match status" value="1"/>
</dbReference>
<dbReference type="PANTHER" id="PTHR33705">
    <property type="entry name" value="PHOSPHOCARRIER PROTEIN HPR"/>
    <property type="match status" value="1"/>
</dbReference>
<dbReference type="PANTHER" id="PTHR33705:SF2">
    <property type="entry name" value="PHOSPHOCARRIER PROTEIN NPR"/>
    <property type="match status" value="1"/>
</dbReference>
<dbReference type="Pfam" id="PF00381">
    <property type="entry name" value="PTS-HPr"/>
    <property type="match status" value="1"/>
</dbReference>
<dbReference type="PRINTS" id="PR00107">
    <property type="entry name" value="PHOSPHOCPHPR"/>
</dbReference>
<dbReference type="SUPFAM" id="SSF55594">
    <property type="entry name" value="HPr-like"/>
    <property type="match status" value="1"/>
</dbReference>
<dbReference type="PROSITE" id="PS51350">
    <property type="entry name" value="PTS_HPR_DOM"/>
    <property type="match status" value="1"/>
</dbReference>
<dbReference type="PROSITE" id="PS00369">
    <property type="entry name" value="PTS_HPR_HIS"/>
    <property type="match status" value="1"/>
</dbReference>
<dbReference type="PROSITE" id="PS00589">
    <property type="entry name" value="PTS_HPR_SER"/>
    <property type="match status" value="1"/>
</dbReference>
<feature type="chain" id="PRO_0000107879" description="Phosphocarrier protein HPr">
    <location>
        <begin position="1"/>
        <end position="88"/>
    </location>
</feature>
<feature type="domain" description="HPr" evidence="2">
    <location>
        <begin position="1"/>
        <end position="88"/>
    </location>
</feature>
<feature type="active site" description="Pros-phosphohistidine intermediate" evidence="2">
    <location>
        <position position="15"/>
    </location>
</feature>
<feature type="modified residue" description="Phosphoserine; by HPrK/P" evidence="2">
    <location>
        <position position="46"/>
    </location>
</feature>
<feature type="strand" evidence="4">
    <location>
        <begin position="2"/>
        <end position="9"/>
    </location>
</feature>
<feature type="helix" evidence="4">
    <location>
        <begin position="16"/>
        <end position="29"/>
    </location>
</feature>
<feature type="strand" evidence="4">
    <location>
        <begin position="32"/>
        <end position="37"/>
    </location>
</feature>
<feature type="strand" evidence="4">
    <location>
        <begin position="40"/>
        <end position="43"/>
    </location>
</feature>
<feature type="strand" evidence="4">
    <location>
        <begin position="46"/>
        <end position="48"/>
    </location>
</feature>
<feature type="helix" evidence="4">
    <location>
        <begin position="49"/>
        <end position="53"/>
    </location>
</feature>
<feature type="strand" evidence="4">
    <location>
        <begin position="57"/>
        <end position="69"/>
    </location>
</feature>
<feature type="helix" evidence="4">
    <location>
        <begin position="70"/>
        <end position="82"/>
    </location>
</feature>
<feature type="helix" evidence="4">
    <location>
        <begin position="83"/>
        <end position="86"/>
    </location>
</feature>
<organism>
    <name type="scientific">Staphylococcus carnosus</name>
    <dbReference type="NCBI Taxonomy" id="1281"/>
    <lineage>
        <taxon>Bacteria</taxon>
        <taxon>Bacillati</taxon>
        <taxon>Bacillota</taxon>
        <taxon>Bacilli</taxon>
        <taxon>Bacillales</taxon>
        <taxon>Staphylococcaceae</taxon>
        <taxon>Staphylococcus</taxon>
    </lineage>
</organism>
<accession>P23534</accession>
<sequence>MEQQSYTIIDETGIHARPATMLVQTASKFDSDIQLEYNGKKVNLKSIMGVMSLGVGKDAEITIYADGSDEADAIQAITDVLSKEGLTE</sequence>
<comment type="function">
    <text>General (non sugar-specific) component of the phosphoenolpyruvate-dependent sugar phosphotransferase system (sugar PTS). This major carbohydrate active-transport system catalyzes the phosphorylation of incoming sugar substrates concomitantly with their translocation across the cell membrane. The phosphoryl group from phosphoenolpyruvate (PEP) is transferred to the phosphoryl carrier protein HPr by enzyme I. Phospho-HPr then transfers it to the PTS EIIA domain.</text>
</comment>
<comment type="function">
    <text evidence="1">P-Ser-HPr interacts with the catabolite control protein A (CcpA), forming a complex that binds to DNA at the catabolite response elements cre, operator sites preceding a large number of catabolite-regulated genes. Thus, P-Ser-HPr is a corepressor in carbon catabolite repression (CCR), a mechanism that allows bacteria to coordinate and optimize the utilization of available carbon sources. P-Ser-HPr also plays a role in inducer exclusion, in which it probably interacts with several non-PTS permeases and inhibits their transport activity (By similarity).</text>
</comment>
<comment type="activity regulation">
    <text>Phosphorylation on Ser-46 inhibits the phosphoryl transfer from enzyme I to HPr.</text>
</comment>
<comment type="subcellular location">
    <subcellularLocation>
        <location>Cytoplasm</location>
    </subcellularLocation>
</comment>
<comment type="similarity">
    <text evidence="3">Belongs to the HPr family.</text>
</comment>
<keyword id="KW-0002">3D-structure</keyword>
<keyword id="KW-0963">Cytoplasm</keyword>
<keyword id="KW-0597">Phosphoprotein</keyword>
<keyword id="KW-0598">Phosphotransferase system</keyword>
<keyword id="KW-0762">Sugar transport</keyword>
<keyword id="KW-0804">Transcription</keyword>
<keyword id="KW-0805">Transcription regulation</keyword>
<keyword id="KW-0813">Transport</keyword>
<gene>
    <name type="primary">ptsH</name>
</gene>
<protein>
    <recommendedName>
        <fullName>Phosphocarrier protein HPr</fullName>
    </recommendedName>
    <alternativeName>
        <fullName>Histidine-containing protein</fullName>
    </alternativeName>
</protein>
<reference key="1">
    <citation type="journal article" date="1991" name="Eur. J. Biochem.">
        <title>Staphylococcal phosphoenolpyruvate-dependent phosphotransferase system. Purification and protein sequencing of the Staphylococcus carnosus histidine-containing protein, and cloning and DNA sequencing of the ptsH gene.</title>
        <authorList>
            <person name="Eisermann R."/>
            <person name="Fischer R."/>
            <person name="Kessler U."/>
            <person name="Neubauer A."/>
            <person name="Hengstenberg W."/>
        </authorList>
    </citation>
    <scope>NUCLEOTIDE SEQUENCE [GENOMIC DNA]</scope>
</reference>
<reference key="2">
    <citation type="journal article" date="1992" name="J. Bacteriol.">
        <title>Staphylococcal phosphoenolpyruvate-dependent phosphotransferase system: molecular cloning and nucleotide sequence of the Staphylococcus carnosus ptsI gene and expression and complementation studies of the gene product.</title>
        <authorList>
            <person name="Kohlbrecher D."/>
            <person name="Eisermann R."/>
            <person name="Hengstenberg W."/>
        </authorList>
    </citation>
    <scope>NUCLEOTIDE SEQUENCE [GENOMIC DNA] OF 43-88</scope>
</reference>
<reference key="3">
    <citation type="journal article" date="2000" name="Protein Sci.">
        <title>15N and 1H NMR study of histidine containing protein (HPr) from Staphylococcus carnosus at high pressure.</title>
        <authorList>
            <person name="Kalbitzer H.R."/>
            <person name="Goerler A."/>
            <person name="Li H."/>
            <person name="Dubovskii P.V."/>
            <person name="Hengstenberg W."/>
            <person name="Kowolik C."/>
            <person name="Yamada H."/>
            <person name="Akasaka K."/>
        </authorList>
    </citation>
    <scope>STRUCTURE BY NMR</scope>
</reference>